<dbReference type="EC" id="2.1.1.177" evidence="1"/>
<dbReference type="EMBL" id="AP006840">
    <property type="protein sequence ID" value="BAD42284.1"/>
    <property type="molecule type" value="Genomic_DNA"/>
</dbReference>
<dbReference type="RefSeq" id="WP_011197415.1">
    <property type="nucleotide sequence ID" value="NC_006177.1"/>
</dbReference>
<dbReference type="SMR" id="Q67J66"/>
<dbReference type="STRING" id="292459.STH3303"/>
<dbReference type="KEGG" id="sth:STH3303"/>
<dbReference type="eggNOG" id="COG1576">
    <property type="taxonomic scope" value="Bacteria"/>
</dbReference>
<dbReference type="HOGENOM" id="CLU_100552_0_0_9"/>
<dbReference type="OrthoDB" id="9806643at2"/>
<dbReference type="Proteomes" id="UP000000417">
    <property type="component" value="Chromosome"/>
</dbReference>
<dbReference type="GO" id="GO:0005737">
    <property type="term" value="C:cytoplasm"/>
    <property type="evidence" value="ECO:0007669"/>
    <property type="project" value="UniProtKB-SubCell"/>
</dbReference>
<dbReference type="GO" id="GO:0070038">
    <property type="term" value="F:rRNA (pseudouridine-N3-)-methyltransferase activity"/>
    <property type="evidence" value="ECO:0007669"/>
    <property type="project" value="UniProtKB-UniRule"/>
</dbReference>
<dbReference type="CDD" id="cd18081">
    <property type="entry name" value="RlmH-like"/>
    <property type="match status" value="1"/>
</dbReference>
<dbReference type="Gene3D" id="3.40.1280.10">
    <property type="match status" value="1"/>
</dbReference>
<dbReference type="HAMAP" id="MF_00658">
    <property type="entry name" value="23SrRNA_methyltr_H"/>
    <property type="match status" value="1"/>
</dbReference>
<dbReference type="InterPro" id="IPR029028">
    <property type="entry name" value="Alpha/beta_knot_MTases"/>
</dbReference>
<dbReference type="InterPro" id="IPR003742">
    <property type="entry name" value="RlmH-like"/>
</dbReference>
<dbReference type="InterPro" id="IPR029026">
    <property type="entry name" value="tRNA_m1G_MTases_N"/>
</dbReference>
<dbReference type="NCBIfam" id="NF000985">
    <property type="entry name" value="PRK00103.1-3"/>
    <property type="match status" value="1"/>
</dbReference>
<dbReference type="PANTHER" id="PTHR33603">
    <property type="entry name" value="METHYLTRANSFERASE"/>
    <property type="match status" value="1"/>
</dbReference>
<dbReference type="PANTHER" id="PTHR33603:SF1">
    <property type="entry name" value="RIBOSOMAL RNA LARGE SUBUNIT METHYLTRANSFERASE H"/>
    <property type="match status" value="1"/>
</dbReference>
<dbReference type="Pfam" id="PF02590">
    <property type="entry name" value="SPOUT_MTase"/>
    <property type="match status" value="1"/>
</dbReference>
<dbReference type="PIRSF" id="PIRSF004505">
    <property type="entry name" value="MT_bac"/>
    <property type="match status" value="1"/>
</dbReference>
<dbReference type="SUPFAM" id="SSF75217">
    <property type="entry name" value="alpha/beta knot"/>
    <property type="match status" value="1"/>
</dbReference>
<reference key="1">
    <citation type="journal article" date="2004" name="Nucleic Acids Res.">
        <title>Genome sequence of Symbiobacterium thermophilum, an uncultivable bacterium that depends on microbial commensalism.</title>
        <authorList>
            <person name="Ueda K."/>
            <person name="Yamashita A."/>
            <person name="Ishikawa J."/>
            <person name="Shimada M."/>
            <person name="Watsuji T."/>
            <person name="Morimura K."/>
            <person name="Ikeda H."/>
            <person name="Hattori M."/>
            <person name="Beppu T."/>
        </authorList>
    </citation>
    <scope>NUCLEOTIDE SEQUENCE [LARGE SCALE GENOMIC DNA]</scope>
    <source>
        <strain>DSM 24528 / JCM 14929 / IAM 14863 / T</strain>
    </source>
</reference>
<feature type="chain" id="PRO_0000198198" description="Ribosomal RNA large subunit methyltransferase H">
    <location>
        <begin position="1"/>
        <end position="161"/>
    </location>
</feature>
<feature type="binding site" evidence="1">
    <location>
        <position position="78"/>
    </location>
    <ligand>
        <name>S-adenosyl-L-methionine</name>
        <dbReference type="ChEBI" id="CHEBI:59789"/>
    </ligand>
</feature>
<feature type="binding site" evidence="1">
    <location>
        <position position="110"/>
    </location>
    <ligand>
        <name>S-adenosyl-L-methionine</name>
        <dbReference type="ChEBI" id="CHEBI:59789"/>
    </ligand>
</feature>
<feature type="binding site" evidence="1">
    <location>
        <begin position="129"/>
        <end position="134"/>
    </location>
    <ligand>
        <name>S-adenosyl-L-methionine</name>
        <dbReference type="ChEBI" id="CHEBI:59789"/>
    </ligand>
</feature>
<organism>
    <name type="scientific">Symbiobacterium thermophilum (strain DSM 24528 / JCM 14929 / IAM 14863 / T)</name>
    <dbReference type="NCBI Taxonomy" id="292459"/>
    <lineage>
        <taxon>Bacteria</taxon>
        <taxon>Bacillati</taxon>
        <taxon>Bacillota</taxon>
        <taxon>Clostridia</taxon>
        <taxon>Eubacteriales</taxon>
        <taxon>Symbiobacteriaceae</taxon>
        <taxon>Symbiobacterium</taxon>
    </lineage>
</organism>
<evidence type="ECO:0000255" key="1">
    <source>
        <dbReference type="HAMAP-Rule" id="MF_00658"/>
    </source>
</evidence>
<accession>Q67J66</accession>
<proteinExistence type="inferred from homology"/>
<sequence length="161" mass="17934">MRIRLVTVGKVKEKYLQDGVQEYLKRLRPYARVEIVTVPDEPIPDGASPAQEAQVMQREGERLLRALDQGGQEHVVVLDGRGKNFSSEELAAFLAERALHGDANLAFVIGGSLGLDPAVLARAGTTLSLGRMTFLHQMVPLILLEQIYRAFKINRGEKYHK</sequence>
<gene>
    <name evidence="1" type="primary">rlmH</name>
    <name type="ordered locus">STH3303</name>
</gene>
<keyword id="KW-0963">Cytoplasm</keyword>
<keyword id="KW-0489">Methyltransferase</keyword>
<keyword id="KW-1185">Reference proteome</keyword>
<keyword id="KW-0698">rRNA processing</keyword>
<keyword id="KW-0949">S-adenosyl-L-methionine</keyword>
<keyword id="KW-0808">Transferase</keyword>
<name>RLMH_SYMTH</name>
<protein>
    <recommendedName>
        <fullName evidence="1">Ribosomal RNA large subunit methyltransferase H</fullName>
        <ecNumber evidence="1">2.1.1.177</ecNumber>
    </recommendedName>
    <alternativeName>
        <fullName evidence="1">23S rRNA (pseudouridine1915-N3)-methyltransferase</fullName>
    </alternativeName>
    <alternativeName>
        <fullName evidence="1">23S rRNA m3Psi1915 methyltransferase</fullName>
    </alternativeName>
    <alternativeName>
        <fullName evidence="1">rRNA (pseudouridine-N3-)-methyltransferase RlmH</fullName>
    </alternativeName>
</protein>
<comment type="function">
    <text evidence="1">Specifically methylates the pseudouridine at position 1915 (m3Psi1915) in 23S rRNA.</text>
</comment>
<comment type="catalytic activity">
    <reaction evidence="1">
        <text>pseudouridine(1915) in 23S rRNA + S-adenosyl-L-methionine = N(3)-methylpseudouridine(1915) in 23S rRNA + S-adenosyl-L-homocysteine + H(+)</text>
        <dbReference type="Rhea" id="RHEA:42752"/>
        <dbReference type="Rhea" id="RHEA-COMP:10221"/>
        <dbReference type="Rhea" id="RHEA-COMP:10222"/>
        <dbReference type="ChEBI" id="CHEBI:15378"/>
        <dbReference type="ChEBI" id="CHEBI:57856"/>
        <dbReference type="ChEBI" id="CHEBI:59789"/>
        <dbReference type="ChEBI" id="CHEBI:65314"/>
        <dbReference type="ChEBI" id="CHEBI:74486"/>
        <dbReference type="EC" id="2.1.1.177"/>
    </reaction>
</comment>
<comment type="subunit">
    <text evidence="1">Homodimer.</text>
</comment>
<comment type="subcellular location">
    <subcellularLocation>
        <location evidence="1">Cytoplasm</location>
    </subcellularLocation>
</comment>
<comment type="similarity">
    <text evidence="1">Belongs to the RNA methyltransferase RlmH family.</text>
</comment>